<gene>
    <name evidence="3" type="ORF">SPBC83.16c</name>
</gene>
<evidence type="ECO:0000250" key="1">
    <source>
        <dbReference type="UniProtKB" id="P47031"/>
    </source>
</evidence>
<evidence type="ECO:0000305" key="2"/>
<evidence type="ECO:0000312" key="3">
    <source>
        <dbReference type="PomBase" id="SPBC83.16c"/>
    </source>
</evidence>
<name>IML2_SCHPO</name>
<proteinExistence type="inferred from homology"/>
<organism>
    <name type="scientific">Schizosaccharomyces pombe (strain 972 / ATCC 24843)</name>
    <name type="common">Fission yeast</name>
    <dbReference type="NCBI Taxonomy" id="284812"/>
    <lineage>
        <taxon>Eukaryota</taxon>
        <taxon>Fungi</taxon>
        <taxon>Dikarya</taxon>
        <taxon>Ascomycota</taxon>
        <taxon>Taphrinomycotina</taxon>
        <taxon>Schizosaccharomycetes</taxon>
        <taxon>Schizosaccharomycetales</taxon>
        <taxon>Schizosaccharomycetaceae</taxon>
        <taxon>Schizosaccharomyces</taxon>
    </lineage>
</organism>
<accession>O94699</accession>
<comment type="function">
    <text evidence="1">Inclusion body (IB) resident protein that interacts strongly with lipid droplet (LD) proteins. Involved in LD-mediated IB clearing after protein folding stress, probably by enabling access to the IBs of an LD-stored soluble sterol derivative that acts as a chaperone in inclusion clearing.</text>
</comment>
<comment type="subunit">
    <text evidence="1">Interacts with lipid droplet proteins.</text>
</comment>
<comment type="subcellular location">
    <subcellularLocation>
        <location evidence="1">Cytoplasm</location>
    </subcellularLocation>
    <subcellularLocation>
        <location evidence="1">Nucleus</location>
    </subcellularLocation>
    <text evidence="1">Localized exclusively in cytoplasmic inclusion bodies under protein folding stress conditions.</text>
</comment>
<comment type="similarity">
    <text evidence="2">Belongs to the IML2 family.</text>
</comment>
<sequence length="563" mass="63485">MSKSQEQRLQNFVTVIQGLNDILDDKMDEATEKFKSGNSSFHLSGQAVVAFIQAVLTFEPSRFKDSQNRIDIAIKALSADKDDASKNNTFLSTFDPGVEYRVSIGLMLLLSALIGFCSESIVTSVKSVYKLRKAHSIFSKINKRHFDHFSAAFHSTGRSDVDLANEYVQTGTLLCTGLFTLLISLLPPKMITILNVFGYKGDRDWALQCMWMPALQRPTSFFAAVAFAALIQYYSGAVQLCSIYKKTPEEPDGWPDKRCFEILEKVEKAHPDGPMWPLHRAKLLSMVKKQDEAIVVLEELMAKPPPRLKQLEVLIVFEHALDCAFSHRYVDGANSFLKLSSLNDSSTALYSYFAAACFLQDVHVNANVEALEKASKLLEPLHDLVANKTAPLDVHIRRKVGKLIKRRASAGNQGGLAEYVGFSPLYELVYVWNGFRRMTDDELSKFDVERMEPWQDQDDDICQALIKATVLRNLGRTDEVFPILQKICAVTRTTETWAVAFAHYEMAVAFFESNGSKKEGLKHCDAYLRKARDFGGDNEFESRLIIRVQLARHVVRKCLQSMS</sequence>
<protein>
    <recommendedName>
        <fullName>Inclusion body clearance protein IML2</fullName>
    </recommendedName>
</protein>
<keyword id="KW-0963">Cytoplasm</keyword>
<keyword id="KW-0539">Nucleus</keyword>
<keyword id="KW-0597">Phosphoprotein</keyword>
<keyword id="KW-1185">Reference proteome</keyword>
<reference key="1">
    <citation type="journal article" date="2002" name="Nature">
        <title>The genome sequence of Schizosaccharomyces pombe.</title>
        <authorList>
            <person name="Wood V."/>
            <person name="Gwilliam R."/>
            <person name="Rajandream M.A."/>
            <person name="Lyne M.H."/>
            <person name="Lyne R."/>
            <person name="Stewart A."/>
            <person name="Sgouros J.G."/>
            <person name="Peat N."/>
            <person name="Hayles J."/>
            <person name="Baker S.G."/>
            <person name="Basham D."/>
            <person name="Bowman S."/>
            <person name="Brooks K."/>
            <person name="Brown D."/>
            <person name="Brown S."/>
            <person name="Chillingworth T."/>
            <person name="Churcher C.M."/>
            <person name="Collins M."/>
            <person name="Connor R."/>
            <person name="Cronin A."/>
            <person name="Davis P."/>
            <person name="Feltwell T."/>
            <person name="Fraser A."/>
            <person name="Gentles S."/>
            <person name="Goble A."/>
            <person name="Hamlin N."/>
            <person name="Harris D.E."/>
            <person name="Hidalgo J."/>
            <person name="Hodgson G."/>
            <person name="Holroyd S."/>
            <person name="Hornsby T."/>
            <person name="Howarth S."/>
            <person name="Huckle E.J."/>
            <person name="Hunt S."/>
            <person name="Jagels K."/>
            <person name="James K.D."/>
            <person name="Jones L."/>
            <person name="Jones M."/>
            <person name="Leather S."/>
            <person name="McDonald S."/>
            <person name="McLean J."/>
            <person name="Mooney P."/>
            <person name="Moule S."/>
            <person name="Mungall K.L."/>
            <person name="Murphy L.D."/>
            <person name="Niblett D."/>
            <person name="Odell C."/>
            <person name="Oliver K."/>
            <person name="O'Neil S."/>
            <person name="Pearson D."/>
            <person name="Quail M.A."/>
            <person name="Rabbinowitsch E."/>
            <person name="Rutherford K.M."/>
            <person name="Rutter S."/>
            <person name="Saunders D."/>
            <person name="Seeger K."/>
            <person name="Sharp S."/>
            <person name="Skelton J."/>
            <person name="Simmonds M.N."/>
            <person name="Squares R."/>
            <person name="Squares S."/>
            <person name="Stevens K."/>
            <person name="Taylor K."/>
            <person name="Taylor R.G."/>
            <person name="Tivey A."/>
            <person name="Walsh S.V."/>
            <person name="Warren T."/>
            <person name="Whitehead S."/>
            <person name="Woodward J.R."/>
            <person name="Volckaert G."/>
            <person name="Aert R."/>
            <person name="Robben J."/>
            <person name="Grymonprez B."/>
            <person name="Weltjens I."/>
            <person name="Vanstreels E."/>
            <person name="Rieger M."/>
            <person name="Schaefer M."/>
            <person name="Mueller-Auer S."/>
            <person name="Gabel C."/>
            <person name="Fuchs M."/>
            <person name="Duesterhoeft A."/>
            <person name="Fritzc C."/>
            <person name="Holzer E."/>
            <person name="Moestl D."/>
            <person name="Hilbert H."/>
            <person name="Borzym K."/>
            <person name="Langer I."/>
            <person name="Beck A."/>
            <person name="Lehrach H."/>
            <person name="Reinhardt R."/>
            <person name="Pohl T.M."/>
            <person name="Eger P."/>
            <person name="Zimmermann W."/>
            <person name="Wedler H."/>
            <person name="Wambutt R."/>
            <person name="Purnelle B."/>
            <person name="Goffeau A."/>
            <person name="Cadieu E."/>
            <person name="Dreano S."/>
            <person name="Gloux S."/>
            <person name="Lelaure V."/>
            <person name="Mottier S."/>
            <person name="Galibert F."/>
            <person name="Aves S.J."/>
            <person name="Xiang Z."/>
            <person name="Hunt C."/>
            <person name="Moore K."/>
            <person name="Hurst S.M."/>
            <person name="Lucas M."/>
            <person name="Rochet M."/>
            <person name="Gaillardin C."/>
            <person name="Tallada V.A."/>
            <person name="Garzon A."/>
            <person name="Thode G."/>
            <person name="Daga R.R."/>
            <person name="Cruzado L."/>
            <person name="Jimenez J."/>
            <person name="Sanchez M."/>
            <person name="del Rey F."/>
            <person name="Benito J."/>
            <person name="Dominguez A."/>
            <person name="Revuelta J.L."/>
            <person name="Moreno S."/>
            <person name="Armstrong J."/>
            <person name="Forsburg S.L."/>
            <person name="Cerutti L."/>
            <person name="Lowe T."/>
            <person name="McCombie W.R."/>
            <person name="Paulsen I."/>
            <person name="Potashkin J."/>
            <person name="Shpakovski G.V."/>
            <person name="Ussery D."/>
            <person name="Barrell B.G."/>
            <person name="Nurse P."/>
        </authorList>
    </citation>
    <scope>NUCLEOTIDE SEQUENCE [LARGE SCALE GENOMIC DNA]</scope>
    <source>
        <strain>972 / ATCC 24843</strain>
    </source>
</reference>
<reference key="2">
    <citation type="journal article" date="2006" name="Nat. Biotechnol.">
        <title>ORFeome cloning and global analysis of protein localization in the fission yeast Schizosaccharomyces pombe.</title>
        <authorList>
            <person name="Matsuyama A."/>
            <person name="Arai R."/>
            <person name="Yashiroda Y."/>
            <person name="Shirai A."/>
            <person name="Kamata A."/>
            <person name="Sekido S."/>
            <person name="Kobayashi Y."/>
            <person name="Hashimoto A."/>
            <person name="Hamamoto M."/>
            <person name="Hiraoka Y."/>
            <person name="Horinouchi S."/>
            <person name="Yoshida M."/>
        </authorList>
    </citation>
    <scope>SUBCELLULAR LOCATION [LARGE SCALE ANALYSIS]</scope>
</reference>
<feature type="chain" id="PRO_0000373873" description="Inclusion body clearance protein IML2">
    <location>
        <begin position="1"/>
        <end position="563"/>
    </location>
</feature>
<dbReference type="EMBL" id="CU329671">
    <property type="protein sequence ID" value="CAB36878.1"/>
    <property type="molecule type" value="Genomic_DNA"/>
</dbReference>
<dbReference type="PIR" id="T40705">
    <property type="entry name" value="T40705"/>
</dbReference>
<dbReference type="RefSeq" id="NP_595648.1">
    <property type="nucleotide sequence ID" value="NM_001021542.2"/>
</dbReference>
<dbReference type="SMR" id="O94699"/>
<dbReference type="BioGRID" id="277702">
    <property type="interactions" value="12"/>
</dbReference>
<dbReference type="STRING" id="284812.O94699"/>
<dbReference type="iPTMnet" id="O94699"/>
<dbReference type="PaxDb" id="4896-SPBC83.16c.1"/>
<dbReference type="EnsemblFungi" id="SPBC83.16c.1">
    <property type="protein sequence ID" value="SPBC83.16c.1:pep"/>
    <property type="gene ID" value="SPBC83.16c"/>
</dbReference>
<dbReference type="KEGG" id="spo:2541188"/>
<dbReference type="PomBase" id="SPBC83.16c"/>
<dbReference type="VEuPathDB" id="FungiDB:SPBC83.16c"/>
<dbReference type="eggNOG" id="KOG3783">
    <property type="taxonomic scope" value="Eukaryota"/>
</dbReference>
<dbReference type="HOGENOM" id="CLU_014926_1_0_1"/>
<dbReference type="InParanoid" id="O94699"/>
<dbReference type="OMA" id="AFHSDIY"/>
<dbReference type="PhylomeDB" id="O94699"/>
<dbReference type="PRO" id="PR:O94699"/>
<dbReference type="Proteomes" id="UP000002485">
    <property type="component" value="Chromosome II"/>
</dbReference>
<dbReference type="GO" id="GO:0005829">
    <property type="term" value="C:cytosol"/>
    <property type="evidence" value="ECO:0007005"/>
    <property type="project" value="PomBase"/>
</dbReference>
<dbReference type="GO" id="GO:0005634">
    <property type="term" value="C:nucleus"/>
    <property type="evidence" value="ECO:0007005"/>
    <property type="project" value="PomBase"/>
</dbReference>
<dbReference type="GO" id="GO:1990748">
    <property type="term" value="P:cellular detoxification"/>
    <property type="evidence" value="ECO:0000303"/>
    <property type="project" value="PomBase"/>
</dbReference>
<dbReference type="GO" id="GO:0071218">
    <property type="term" value="P:cellular response to misfolded protein"/>
    <property type="evidence" value="ECO:0000266"/>
    <property type="project" value="PomBase"/>
</dbReference>
<dbReference type="InterPro" id="IPR019412">
    <property type="entry name" value="Iml2/TPR_39"/>
</dbReference>
<dbReference type="PANTHER" id="PTHR31859:SF21">
    <property type="entry name" value="INCLUSION BODY CLEARANCE PROTEIN IML2"/>
    <property type="match status" value="1"/>
</dbReference>
<dbReference type="PANTHER" id="PTHR31859">
    <property type="entry name" value="TETRATRICOPEPTIDE REPEAT PROTEIN 39 FAMILY MEMBER"/>
    <property type="match status" value="1"/>
</dbReference>
<dbReference type="Pfam" id="PF10300">
    <property type="entry name" value="Iml2-TPR_39"/>
    <property type="match status" value="1"/>
</dbReference>